<sequence>MRGRAGETTMTAALQELAAHIEMKRPDCVISTEIAHDELTVVATPNSIVGLVAFLKTDATCKFSTLIDITAVDYPERAQRFDVVYHFLSMYQNHRIRIRVPVREDDIVPSIISEHPSANWFEREVFDMFGILFSGHPDLRRILTDYGFRGYPLRKDFPTTGYTEVRYDEEKKRVVYEPVNLVQEYRQFDFMSPWEGAEYILPGDEKTDDKAEAKG</sequence>
<proteinExistence type="inferred from homology"/>
<comment type="function">
    <text evidence="1">NDH-1 shuttles electrons from NADH, via FMN and iron-sulfur (Fe-S) centers, to quinones in the respiratory chain. The immediate electron acceptor for the enzyme in this species is believed to be ubiquinone. Couples the redox reaction to proton translocation (for every two electrons transferred, four hydrogen ions are translocated across the cytoplasmic membrane), and thus conserves the redox energy in a proton gradient.</text>
</comment>
<comment type="catalytic activity">
    <reaction evidence="1">
        <text>a quinone + NADH + 5 H(+)(in) = a quinol + NAD(+) + 4 H(+)(out)</text>
        <dbReference type="Rhea" id="RHEA:57888"/>
        <dbReference type="ChEBI" id="CHEBI:15378"/>
        <dbReference type="ChEBI" id="CHEBI:24646"/>
        <dbReference type="ChEBI" id="CHEBI:57540"/>
        <dbReference type="ChEBI" id="CHEBI:57945"/>
        <dbReference type="ChEBI" id="CHEBI:132124"/>
    </reaction>
</comment>
<comment type="subunit">
    <text evidence="1">NDH-1 is composed of 14 different subunits. Subunits NuoB, C, D, E, F, and G constitute the peripheral sector of the complex.</text>
</comment>
<comment type="subcellular location">
    <subcellularLocation>
        <location evidence="1">Cell inner membrane</location>
        <topology evidence="1">Peripheral membrane protein</topology>
        <orientation evidence="1">Cytoplasmic side</orientation>
    </subcellularLocation>
</comment>
<comment type="similarity">
    <text evidence="1">Belongs to the complex I 30 kDa subunit family.</text>
</comment>
<accession>A8LIT7</accession>
<name>NUOC_DINSH</name>
<dbReference type="EC" id="7.1.1.-" evidence="1"/>
<dbReference type="EMBL" id="CP000830">
    <property type="protein sequence ID" value="ABV93051.1"/>
    <property type="molecule type" value="Genomic_DNA"/>
</dbReference>
<dbReference type="SMR" id="A8LIT7"/>
<dbReference type="STRING" id="398580.Dshi_1309"/>
<dbReference type="KEGG" id="dsh:Dshi_1309"/>
<dbReference type="eggNOG" id="COG0852">
    <property type="taxonomic scope" value="Bacteria"/>
</dbReference>
<dbReference type="HOGENOM" id="CLU_042628_2_1_5"/>
<dbReference type="Proteomes" id="UP000006833">
    <property type="component" value="Chromosome"/>
</dbReference>
<dbReference type="GO" id="GO:0005886">
    <property type="term" value="C:plasma membrane"/>
    <property type="evidence" value="ECO:0007669"/>
    <property type="project" value="UniProtKB-SubCell"/>
</dbReference>
<dbReference type="GO" id="GO:0008137">
    <property type="term" value="F:NADH dehydrogenase (ubiquinone) activity"/>
    <property type="evidence" value="ECO:0007669"/>
    <property type="project" value="InterPro"/>
</dbReference>
<dbReference type="GO" id="GO:0050136">
    <property type="term" value="F:NADH:ubiquinone reductase (non-electrogenic) activity"/>
    <property type="evidence" value="ECO:0007669"/>
    <property type="project" value="UniProtKB-UniRule"/>
</dbReference>
<dbReference type="GO" id="GO:0048038">
    <property type="term" value="F:quinone binding"/>
    <property type="evidence" value="ECO:0007669"/>
    <property type="project" value="UniProtKB-KW"/>
</dbReference>
<dbReference type="Gene3D" id="3.30.460.80">
    <property type="entry name" value="NADH:ubiquinone oxidoreductase, 30kDa subunit"/>
    <property type="match status" value="1"/>
</dbReference>
<dbReference type="HAMAP" id="MF_01357">
    <property type="entry name" value="NDH1_NuoC"/>
    <property type="match status" value="1"/>
</dbReference>
<dbReference type="InterPro" id="IPR010218">
    <property type="entry name" value="NADH_DH_suC"/>
</dbReference>
<dbReference type="InterPro" id="IPR037232">
    <property type="entry name" value="NADH_quin_OxRdtase_su_C/D-like"/>
</dbReference>
<dbReference type="InterPro" id="IPR001268">
    <property type="entry name" value="NADH_UbQ_OxRdtase_30kDa_su"/>
</dbReference>
<dbReference type="InterPro" id="IPR020396">
    <property type="entry name" value="NADH_UbQ_OxRdtase_CS"/>
</dbReference>
<dbReference type="NCBIfam" id="TIGR01961">
    <property type="entry name" value="NuoC_fam"/>
    <property type="match status" value="1"/>
</dbReference>
<dbReference type="NCBIfam" id="NF004733">
    <property type="entry name" value="PRK06074.1-5"/>
    <property type="match status" value="1"/>
</dbReference>
<dbReference type="PANTHER" id="PTHR10884:SF14">
    <property type="entry name" value="NADH DEHYDROGENASE [UBIQUINONE] IRON-SULFUR PROTEIN 3, MITOCHONDRIAL"/>
    <property type="match status" value="1"/>
</dbReference>
<dbReference type="PANTHER" id="PTHR10884">
    <property type="entry name" value="NADH DEHYDROGENASE UBIQUINONE IRON-SULFUR PROTEIN 3"/>
    <property type="match status" value="1"/>
</dbReference>
<dbReference type="Pfam" id="PF00329">
    <property type="entry name" value="Complex1_30kDa"/>
    <property type="match status" value="1"/>
</dbReference>
<dbReference type="SUPFAM" id="SSF143243">
    <property type="entry name" value="Nqo5-like"/>
    <property type="match status" value="1"/>
</dbReference>
<dbReference type="PROSITE" id="PS00542">
    <property type="entry name" value="COMPLEX1_30K"/>
    <property type="match status" value="1"/>
</dbReference>
<organism>
    <name type="scientific">Dinoroseobacter shibae (strain DSM 16493 / NCIMB 14021 / DFL 12)</name>
    <dbReference type="NCBI Taxonomy" id="398580"/>
    <lineage>
        <taxon>Bacteria</taxon>
        <taxon>Pseudomonadati</taxon>
        <taxon>Pseudomonadota</taxon>
        <taxon>Alphaproteobacteria</taxon>
        <taxon>Rhodobacterales</taxon>
        <taxon>Roseobacteraceae</taxon>
        <taxon>Dinoroseobacter</taxon>
    </lineage>
</organism>
<gene>
    <name evidence="1" type="primary">nuoC</name>
    <name type="ordered locus">Dshi_1309</name>
</gene>
<evidence type="ECO:0000255" key="1">
    <source>
        <dbReference type="HAMAP-Rule" id="MF_01357"/>
    </source>
</evidence>
<keyword id="KW-0997">Cell inner membrane</keyword>
<keyword id="KW-1003">Cell membrane</keyword>
<keyword id="KW-0472">Membrane</keyword>
<keyword id="KW-0520">NAD</keyword>
<keyword id="KW-0874">Quinone</keyword>
<keyword id="KW-1185">Reference proteome</keyword>
<keyword id="KW-1278">Translocase</keyword>
<keyword id="KW-0813">Transport</keyword>
<keyword id="KW-0830">Ubiquinone</keyword>
<reference key="1">
    <citation type="journal article" date="2010" name="ISME J.">
        <title>The complete genome sequence of the algal symbiont Dinoroseobacter shibae: a hitchhiker's guide to life in the sea.</title>
        <authorList>
            <person name="Wagner-Dobler I."/>
            <person name="Ballhausen B."/>
            <person name="Berger M."/>
            <person name="Brinkhoff T."/>
            <person name="Buchholz I."/>
            <person name="Bunk B."/>
            <person name="Cypionka H."/>
            <person name="Daniel R."/>
            <person name="Drepper T."/>
            <person name="Gerdts G."/>
            <person name="Hahnke S."/>
            <person name="Han C."/>
            <person name="Jahn D."/>
            <person name="Kalhoefer D."/>
            <person name="Kiss H."/>
            <person name="Klenk H.P."/>
            <person name="Kyrpides N."/>
            <person name="Liebl W."/>
            <person name="Liesegang H."/>
            <person name="Meincke L."/>
            <person name="Pati A."/>
            <person name="Petersen J."/>
            <person name="Piekarski T."/>
            <person name="Pommerenke C."/>
            <person name="Pradella S."/>
            <person name="Pukall R."/>
            <person name="Rabus R."/>
            <person name="Stackebrandt E."/>
            <person name="Thole S."/>
            <person name="Thompson L."/>
            <person name="Tielen P."/>
            <person name="Tomasch J."/>
            <person name="von Jan M."/>
            <person name="Wanphrut N."/>
            <person name="Wichels A."/>
            <person name="Zech H."/>
            <person name="Simon M."/>
        </authorList>
    </citation>
    <scope>NUCLEOTIDE SEQUENCE [LARGE SCALE GENOMIC DNA]</scope>
    <source>
        <strain>DSM 16493 / NCIMB 14021 / DFL 12</strain>
    </source>
</reference>
<protein>
    <recommendedName>
        <fullName evidence="1">NADH-quinone oxidoreductase subunit C</fullName>
        <ecNumber evidence="1">7.1.1.-</ecNumber>
    </recommendedName>
    <alternativeName>
        <fullName evidence="1">NADH dehydrogenase I subunit C</fullName>
    </alternativeName>
    <alternativeName>
        <fullName evidence="1">NDH-1 subunit C</fullName>
    </alternativeName>
</protein>
<feature type="chain" id="PRO_0000358093" description="NADH-quinone oxidoreductase subunit C">
    <location>
        <begin position="1"/>
        <end position="215"/>
    </location>
</feature>